<gene>
    <name type="ordered locus">RHE_CH01817</name>
</gene>
<proteinExistence type="inferred from homology"/>
<protein>
    <recommendedName>
        <fullName evidence="1">Deoxyguanosinetriphosphate triphosphohydrolase-like protein</fullName>
    </recommendedName>
</protein>
<sequence length="405" mass="45636">MTVDRRALGFGGSERAVYAADPWTTRGRLYPEDGSPTRSDFQRDRDRIVHTTAFRRLKHKTQVFIAQDGDHYRTRLTHTIEVAQIARALARALKLDEDLAEGVALVHDFGHTPFGHTGEDALHEVLLPYGGFDHNAQSLRIVTKLERRYAEFDGINLTWESLEGLVKHNGPLLTPEGAGTRGPVPQPILDYCELHDLELATYASLEAQVAAIADDIAYNTHDIDDGLRSGYLTFDMLEEIPFLAGLMAEVRARYPHLEPSRFTHEIMRRQITRMVEDVIGVAQQRLSILRPESAADIRAADRVIATFSDAMAETDRQIKALLFKRIYRNPDIMRIRAGAAQIVTDLFAAYMASPKEMQSHYWVDHIAGLADAPKARHVGDYLAGMTDTYAISAHRRLFDHTPDLR</sequence>
<feature type="chain" id="PRO_1000066432" description="Deoxyguanosinetriphosphate triphosphohydrolase-like protein">
    <location>
        <begin position="1"/>
        <end position="405"/>
    </location>
</feature>
<feature type="domain" description="HD" evidence="2">
    <location>
        <begin position="75"/>
        <end position="219"/>
    </location>
</feature>
<organism>
    <name type="scientific">Rhizobium etli (strain ATCC 51251 / DSM 11541 / JCM 21823 / NBRC 15573 / CFN 42)</name>
    <dbReference type="NCBI Taxonomy" id="347834"/>
    <lineage>
        <taxon>Bacteria</taxon>
        <taxon>Pseudomonadati</taxon>
        <taxon>Pseudomonadota</taxon>
        <taxon>Alphaproteobacteria</taxon>
        <taxon>Hyphomicrobiales</taxon>
        <taxon>Rhizobiaceae</taxon>
        <taxon>Rhizobium/Agrobacterium group</taxon>
        <taxon>Rhizobium</taxon>
    </lineage>
</organism>
<accession>Q2K976</accession>
<dbReference type="EMBL" id="CP000133">
    <property type="protein sequence ID" value="ABC90610.1"/>
    <property type="molecule type" value="Genomic_DNA"/>
</dbReference>
<dbReference type="RefSeq" id="WP_011425107.1">
    <property type="nucleotide sequence ID" value="NC_007761.1"/>
</dbReference>
<dbReference type="SMR" id="Q2K976"/>
<dbReference type="KEGG" id="ret:RHE_CH01817"/>
<dbReference type="eggNOG" id="COG0232">
    <property type="taxonomic scope" value="Bacteria"/>
</dbReference>
<dbReference type="HOGENOM" id="CLU_028163_1_0_5"/>
<dbReference type="OrthoDB" id="9803619at2"/>
<dbReference type="Proteomes" id="UP000001936">
    <property type="component" value="Chromosome"/>
</dbReference>
<dbReference type="GO" id="GO:0008832">
    <property type="term" value="F:dGTPase activity"/>
    <property type="evidence" value="ECO:0007669"/>
    <property type="project" value="TreeGrafter"/>
</dbReference>
<dbReference type="GO" id="GO:0006203">
    <property type="term" value="P:dGTP catabolic process"/>
    <property type="evidence" value="ECO:0007669"/>
    <property type="project" value="TreeGrafter"/>
</dbReference>
<dbReference type="CDD" id="cd00077">
    <property type="entry name" value="HDc"/>
    <property type="match status" value="1"/>
</dbReference>
<dbReference type="Gene3D" id="1.10.3210.10">
    <property type="entry name" value="Hypothetical protein af1432"/>
    <property type="match status" value="1"/>
</dbReference>
<dbReference type="HAMAP" id="MF_01212">
    <property type="entry name" value="dGTPase_type2"/>
    <property type="match status" value="1"/>
</dbReference>
<dbReference type="InterPro" id="IPR006261">
    <property type="entry name" value="dGTPase"/>
</dbReference>
<dbReference type="InterPro" id="IPR050135">
    <property type="entry name" value="dGTPase-like"/>
</dbReference>
<dbReference type="InterPro" id="IPR023023">
    <property type="entry name" value="dNTPase_2"/>
</dbReference>
<dbReference type="InterPro" id="IPR003607">
    <property type="entry name" value="HD/PDEase_dom"/>
</dbReference>
<dbReference type="InterPro" id="IPR006674">
    <property type="entry name" value="HD_domain"/>
</dbReference>
<dbReference type="InterPro" id="IPR026875">
    <property type="entry name" value="PHydrolase_assoc_dom"/>
</dbReference>
<dbReference type="NCBIfam" id="TIGR01353">
    <property type="entry name" value="dGTP_triPase"/>
    <property type="match status" value="1"/>
</dbReference>
<dbReference type="NCBIfam" id="NF002326">
    <property type="entry name" value="PRK01286.1-1"/>
    <property type="match status" value="1"/>
</dbReference>
<dbReference type="NCBIfam" id="NF002328">
    <property type="entry name" value="PRK01286.1-3"/>
    <property type="match status" value="1"/>
</dbReference>
<dbReference type="PANTHER" id="PTHR11373:SF43">
    <property type="entry name" value="DEOXYGUANOSINETRIPHOSPHATE TRIPHOSPHOHYDROLASE-LIKE PROTEIN"/>
    <property type="match status" value="1"/>
</dbReference>
<dbReference type="PANTHER" id="PTHR11373">
    <property type="entry name" value="DEOXYNUCLEOSIDE TRIPHOSPHATE TRIPHOSPHOHYDROLASE"/>
    <property type="match status" value="1"/>
</dbReference>
<dbReference type="Pfam" id="PF01966">
    <property type="entry name" value="HD"/>
    <property type="match status" value="1"/>
</dbReference>
<dbReference type="Pfam" id="PF13286">
    <property type="entry name" value="HD_assoc"/>
    <property type="match status" value="1"/>
</dbReference>
<dbReference type="SMART" id="SM00471">
    <property type="entry name" value="HDc"/>
    <property type="match status" value="1"/>
</dbReference>
<dbReference type="SUPFAM" id="SSF109604">
    <property type="entry name" value="HD-domain/PDEase-like"/>
    <property type="match status" value="1"/>
</dbReference>
<dbReference type="PROSITE" id="PS51831">
    <property type="entry name" value="HD"/>
    <property type="match status" value="1"/>
</dbReference>
<reference key="1">
    <citation type="journal article" date="2006" name="Proc. Natl. Acad. Sci. U.S.A.">
        <title>The partitioned Rhizobium etli genome: genetic and metabolic redundancy in seven interacting replicons.</title>
        <authorList>
            <person name="Gonzalez V."/>
            <person name="Santamaria R.I."/>
            <person name="Bustos P."/>
            <person name="Hernandez-Gonzalez I."/>
            <person name="Medrano-Soto A."/>
            <person name="Moreno-Hagelsieb G."/>
            <person name="Janga S.C."/>
            <person name="Ramirez M.A."/>
            <person name="Jimenez-Jacinto V."/>
            <person name="Collado-Vides J."/>
            <person name="Davila G."/>
        </authorList>
    </citation>
    <scope>NUCLEOTIDE SEQUENCE [LARGE SCALE GENOMIC DNA]</scope>
    <source>
        <strain>ATCC 51251 / DSM 11541 / JCM 21823 / NBRC 15573 / CFN 42</strain>
    </source>
</reference>
<keyword id="KW-0378">Hydrolase</keyword>
<keyword id="KW-1185">Reference proteome</keyword>
<comment type="similarity">
    <text evidence="1">Belongs to the dGTPase family. Type 2 subfamily.</text>
</comment>
<name>DGTL1_RHIEC</name>
<evidence type="ECO:0000255" key="1">
    <source>
        <dbReference type="HAMAP-Rule" id="MF_01212"/>
    </source>
</evidence>
<evidence type="ECO:0000255" key="2">
    <source>
        <dbReference type="PROSITE-ProRule" id="PRU01175"/>
    </source>
</evidence>